<evidence type="ECO:0000305" key="1"/>
<keyword id="KW-1185">Reference proteome</keyword>
<dbReference type="EMBL" id="U00096">
    <property type="protein sequence ID" value="AAC74245.1"/>
    <property type="molecule type" value="Genomic_DNA"/>
</dbReference>
<dbReference type="EMBL" id="AP009048">
    <property type="protein sequence ID" value="BAE76384.1"/>
    <property type="molecule type" value="Genomic_DNA"/>
</dbReference>
<dbReference type="PIR" id="F64861">
    <property type="entry name" value="F64861"/>
</dbReference>
<dbReference type="RefSeq" id="NP_415679.1">
    <property type="nucleotide sequence ID" value="NC_000913.3"/>
</dbReference>
<dbReference type="RefSeq" id="WP_000373101.1">
    <property type="nucleotide sequence ID" value="NZ_STEB01000023.1"/>
</dbReference>
<dbReference type="SMR" id="P75988"/>
<dbReference type="BioGRID" id="4262862">
    <property type="interactions" value="17"/>
</dbReference>
<dbReference type="DIP" id="DIP-11564N"/>
<dbReference type="FunCoup" id="P75988">
    <property type="interactions" value="45"/>
</dbReference>
<dbReference type="IntAct" id="P75988">
    <property type="interactions" value="4"/>
</dbReference>
<dbReference type="STRING" id="511145.b1161"/>
<dbReference type="PaxDb" id="511145-b1161"/>
<dbReference type="EnsemblBacteria" id="AAC74245">
    <property type="protein sequence ID" value="AAC74245"/>
    <property type="gene ID" value="b1161"/>
</dbReference>
<dbReference type="GeneID" id="945733"/>
<dbReference type="KEGG" id="ecj:JW1148"/>
<dbReference type="KEGG" id="eco:b1161"/>
<dbReference type="KEGG" id="ecoc:C3026_06845"/>
<dbReference type="PATRIC" id="fig|511145.12.peg.1202"/>
<dbReference type="EchoBASE" id="EB3994"/>
<dbReference type="eggNOG" id="COG5562">
    <property type="taxonomic scope" value="Bacteria"/>
</dbReference>
<dbReference type="HOGENOM" id="CLU_129752_0_0_6"/>
<dbReference type="InParanoid" id="P75988"/>
<dbReference type="OMA" id="STFQEYC"/>
<dbReference type="OrthoDB" id="6628429at2"/>
<dbReference type="PhylomeDB" id="P75988"/>
<dbReference type="BioCyc" id="EcoCyc:G6601-MONOMER"/>
<dbReference type="PRO" id="PR:P75988"/>
<dbReference type="Proteomes" id="UP000000625">
    <property type="component" value="Chromosome"/>
</dbReference>
<dbReference type="Gene3D" id="3.30.1810.10">
    <property type="entry name" value="YdfO-like"/>
    <property type="match status" value="1"/>
</dbReference>
<dbReference type="InterPro" id="IPR009833">
    <property type="entry name" value="DUF1398"/>
</dbReference>
<dbReference type="InterPro" id="IPR036696">
    <property type="entry name" value="YdfO-like_sf"/>
</dbReference>
<dbReference type="Pfam" id="PF07166">
    <property type="entry name" value="DUF1398"/>
    <property type="match status" value="1"/>
</dbReference>
<dbReference type="SUPFAM" id="SSF160419">
    <property type="entry name" value="YdfO-like"/>
    <property type="match status" value="1"/>
</dbReference>
<reference key="1">
    <citation type="journal article" date="1997" name="Science">
        <title>The complete genome sequence of Escherichia coli K-12.</title>
        <authorList>
            <person name="Blattner F.R."/>
            <person name="Plunkett G. III"/>
            <person name="Bloch C.A."/>
            <person name="Perna N.T."/>
            <person name="Burland V."/>
            <person name="Riley M."/>
            <person name="Collado-Vides J."/>
            <person name="Glasner J.D."/>
            <person name="Rode C.K."/>
            <person name="Mayhew G.F."/>
            <person name="Gregor J."/>
            <person name="Davis N.W."/>
            <person name="Kirkpatrick H.A."/>
            <person name="Goeden M.A."/>
            <person name="Rose D.J."/>
            <person name="Mau B."/>
            <person name="Shao Y."/>
        </authorList>
    </citation>
    <scope>NUCLEOTIDE SEQUENCE [LARGE SCALE GENOMIC DNA]</scope>
    <source>
        <strain>K12 / MG1655 / ATCC 47076</strain>
    </source>
</reference>
<reference key="2">
    <citation type="journal article" date="2006" name="Mol. Syst. Biol.">
        <title>Highly accurate genome sequences of Escherichia coli K-12 strains MG1655 and W3110.</title>
        <authorList>
            <person name="Hayashi K."/>
            <person name="Morooka N."/>
            <person name="Yamamoto Y."/>
            <person name="Fujita K."/>
            <person name="Isono K."/>
            <person name="Choi S."/>
            <person name="Ohtsubo E."/>
            <person name="Baba T."/>
            <person name="Wanner B.L."/>
            <person name="Mori H."/>
            <person name="Horiuchi T."/>
        </authorList>
    </citation>
    <scope>NUCLEOTIDE SEQUENCE [LARGE SCALE GENOMIC DNA]</scope>
    <source>
        <strain>K12 / W3110 / ATCC 27325 / DSM 5911</strain>
    </source>
</reference>
<sequence>MDQVVVFQKMFEQVRKEQNFSWFYSELKHHRIAHYIYYLATDNIRIITHDDTVLLLRGTRNLLKVSTTKNPAKIKEAALLHICGKSTFREYCSTLAGAGVFRWVTDVNHNKRSYYAIDNTLLYIEDVENNKPLI</sequence>
<protein>
    <recommendedName>
        <fullName>Uncharacterized protein YcgX</fullName>
    </recommendedName>
</protein>
<organism>
    <name type="scientific">Escherichia coli (strain K12)</name>
    <dbReference type="NCBI Taxonomy" id="83333"/>
    <lineage>
        <taxon>Bacteria</taxon>
        <taxon>Pseudomonadati</taxon>
        <taxon>Pseudomonadota</taxon>
        <taxon>Gammaproteobacteria</taxon>
        <taxon>Enterobacterales</taxon>
        <taxon>Enterobacteriaceae</taxon>
        <taxon>Escherichia</taxon>
    </lineage>
</organism>
<proteinExistence type="predicted"/>
<feature type="chain" id="PRO_0000168859" description="Uncharacterized protein YcgX">
    <location>
        <begin position="1"/>
        <end position="134"/>
    </location>
</feature>
<gene>
    <name type="primary">ycgX</name>
    <name type="ordered locus">b1161</name>
    <name type="ordered locus">JW1148</name>
</gene>
<accession>P75988</accession>
<accession>Q2MBH2</accession>
<comment type="similarity">
    <text evidence="1">To E.coli YbcV and YdfO.</text>
</comment>
<name>YCGX_ECOLI</name>